<dbReference type="EMBL" id="FM200053">
    <property type="protein sequence ID" value="CAR59140.1"/>
    <property type="molecule type" value="Genomic_DNA"/>
</dbReference>
<dbReference type="RefSeq" id="WP_000072527.1">
    <property type="nucleotide sequence ID" value="NC_011147.1"/>
</dbReference>
<dbReference type="SMR" id="B5BHE2"/>
<dbReference type="KEGG" id="sek:SSPA0989"/>
<dbReference type="HOGENOM" id="CLU_067812_0_1_6"/>
<dbReference type="Proteomes" id="UP000001869">
    <property type="component" value="Chromosome"/>
</dbReference>
<dbReference type="GO" id="GO:0000902">
    <property type="term" value="P:cell morphogenesis"/>
    <property type="evidence" value="ECO:0007669"/>
    <property type="project" value="InterPro"/>
</dbReference>
<dbReference type="GO" id="GO:0000917">
    <property type="term" value="P:division septum assembly"/>
    <property type="evidence" value="ECO:0007669"/>
    <property type="project" value="UniProtKB-KW"/>
</dbReference>
<dbReference type="GO" id="GO:0051302">
    <property type="term" value="P:regulation of cell division"/>
    <property type="evidence" value="ECO:0007669"/>
    <property type="project" value="InterPro"/>
</dbReference>
<dbReference type="GO" id="GO:1901891">
    <property type="term" value="P:regulation of cell septum assembly"/>
    <property type="evidence" value="ECO:0007669"/>
    <property type="project" value="InterPro"/>
</dbReference>
<dbReference type="FunFam" id="2.160.20.70:FF:000002">
    <property type="entry name" value="Probable septum site-determining protein MinC"/>
    <property type="match status" value="1"/>
</dbReference>
<dbReference type="Gene3D" id="2.160.20.70">
    <property type="match status" value="1"/>
</dbReference>
<dbReference type="Gene3D" id="3.30.70.260">
    <property type="match status" value="1"/>
</dbReference>
<dbReference type="HAMAP" id="MF_00267">
    <property type="entry name" value="MinC"/>
    <property type="match status" value="1"/>
</dbReference>
<dbReference type="InterPro" id="IPR016098">
    <property type="entry name" value="CAP/MinC_C"/>
</dbReference>
<dbReference type="InterPro" id="IPR013033">
    <property type="entry name" value="MinC"/>
</dbReference>
<dbReference type="InterPro" id="IPR036145">
    <property type="entry name" value="MinC_C_sf"/>
</dbReference>
<dbReference type="InterPro" id="IPR007874">
    <property type="entry name" value="MinC_N"/>
</dbReference>
<dbReference type="InterPro" id="IPR005526">
    <property type="entry name" value="Septum_form_inhib_MinC_C"/>
</dbReference>
<dbReference type="NCBIfam" id="TIGR01222">
    <property type="entry name" value="minC"/>
    <property type="match status" value="1"/>
</dbReference>
<dbReference type="PANTHER" id="PTHR34108">
    <property type="entry name" value="SEPTUM SITE-DETERMINING PROTEIN MINC"/>
    <property type="match status" value="1"/>
</dbReference>
<dbReference type="PANTHER" id="PTHR34108:SF1">
    <property type="entry name" value="SEPTUM SITE-DETERMINING PROTEIN MINC"/>
    <property type="match status" value="1"/>
</dbReference>
<dbReference type="Pfam" id="PF03775">
    <property type="entry name" value="MinC_C"/>
    <property type="match status" value="1"/>
</dbReference>
<dbReference type="Pfam" id="PF05209">
    <property type="entry name" value="MinC_N"/>
    <property type="match status" value="1"/>
</dbReference>
<dbReference type="SUPFAM" id="SSF63848">
    <property type="entry name" value="Cell-division inhibitor MinC, C-terminal domain"/>
    <property type="match status" value="1"/>
</dbReference>
<feature type="chain" id="PRO_1000114293" description="Probable septum site-determining protein MinC">
    <location>
        <begin position="1"/>
        <end position="235"/>
    </location>
</feature>
<feature type="region of interest" description="Disordered" evidence="2">
    <location>
        <begin position="104"/>
        <end position="125"/>
    </location>
</feature>
<feature type="compositionally biased region" description="Pro residues" evidence="2">
    <location>
        <begin position="110"/>
        <end position="119"/>
    </location>
</feature>
<protein>
    <recommendedName>
        <fullName evidence="1">Probable septum site-determining protein MinC</fullName>
    </recommendedName>
</protein>
<sequence length="235" mass="25246">MSNTPIELKGSSFTLSVVHLHEAEPEVIRQALEDKIAQAPAFLKHAPVVINVSGLESPVNWPELHKIVTSTGLRIIGVSGCKDASLKVEIDRMGLPLLTEGKEKAVRPAPVEPATPSEPPQNANPITKTRLIDVPVRSGQRIYAPQCDLIVTSHVSAGAELIADGNIHVYGMMRGRALAGASGDREAQIFCTHLTAELVSIAGVYWLSDKIPAEFYGKAARLRLADNALTVQPLN</sequence>
<name>MINC_SALPK</name>
<organism>
    <name type="scientific">Salmonella paratyphi A (strain AKU_12601)</name>
    <dbReference type="NCBI Taxonomy" id="554290"/>
    <lineage>
        <taxon>Bacteria</taxon>
        <taxon>Pseudomonadati</taxon>
        <taxon>Pseudomonadota</taxon>
        <taxon>Gammaproteobacteria</taxon>
        <taxon>Enterobacterales</taxon>
        <taxon>Enterobacteriaceae</taxon>
        <taxon>Salmonella</taxon>
    </lineage>
</organism>
<proteinExistence type="inferred from homology"/>
<reference key="1">
    <citation type="journal article" date="2009" name="BMC Genomics">
        <title>Pseudogene accumulation in the evolutionary histories of Salmonella enterica serovars Paratyphi A and Typhi.</title>
        <authorList>
            <person name="Holt K.E."/>
            <person name="Thomson N.R."/>
            <person name="Wain J."/>
            <person name="Langridge G.C."/>
            <person name="Hasan R."/>
            <person name="Bhutta Z.A."/>
            <person name="Quail M.A."/>
            <person name="Norbertczak H."/>
            <person name="Walker D."/>
            <person name="Simmonds M."/>
            <person name="White B."/>
            <person name="Bason N."/>
            <person name="Mungall K."/>
            <person name="Dougan G."/>
            <person name="Parkhill J."/>
        </authorList>
    </citation>
    <scope>NUCLEOTIDE SEQUENCE [LARGE SCALE GENOMIC DNA]</scope>
    <source>
        <strain>AKU_12601</strain>
    </source>
</reference>
<keyword id="KW-0131">Cell cycle</keyword>
<keyword id="KW-0132">Cell division</keyword>
<keyword id="KW-0717">Septation</keyword>
<evidence type="ECO:0000255" key="1">
    <source>
        <dbReference type="HAMAP-Rule" id="MF_00267"/>
    </source>
</evidence>
<evidence type="ECO:0000256" key="2">
    <source>
        <dbReference type="SAM" id="MobiDB-lite"/>
    </source>
</evidence>
<comment type="function">
    <text evidence="1">Cell division inhibitor that blocks the formation of polar Z ring septums. Rapidly oscillates between the poles of the cell to destabilize FtsZ filaments that have formed before they mature into polar Z rings. Prevents FtsZ polymerization.</text>
</comment>
<comment type="subunit">
    <text evidence="1">Interacts with MinD and FtsZ.</text>
</comment>
<comment type="similarity">
    <text evidence="1">Belongs to the MinC family.</text>
</comment>
<gene>
    <name evidence="1" type="primary">minC</name>
    <name type="ordered locus">SSPA0989</name>
</gene>
<accession>B5BHE2</accession>